<organism>
    <name type="scientific">Dictyostelium discoideum</name>
    <name type="common">Social amoeba</name>
    <dbReference type="NCBI Taxonomy" id="44689"/>
    <lineage>
        <taxon>Eukaryota</taxon>
        <taxon>Amoebozoa</taxon>
        <taxon>Evosea</taxon>
        <taxon>Eumycetozoa</taxon>
        <taxon>Dictyostelia</taxon>
        <taxon>Dictyosteliales</taxon>
        <taxon>Dictyosteliaceae</taxon>
        <taxon>Dictyostelium</taxon>
    </lineage>
</organism>
<name>Y7090_DICDI</name>
<dbReference type="EMBL" id="AAFI02000015">
    <property type="protein sequence ID" value="EAL69187.1"/>
    <property type="molecule type" value="Genomic_DNA"/>
</dbReference>
<dbReference type="RefSeq" id="XP_643156.1">
    <property type="nucleotide sequence ID" value="XM_638064.1"/>
</dbReference>
<dbReference type="PaxDb" id="44689-DDB0305052"/>
<dbReference type="EnsemblProtists" id="EAL69187">
    <property type="protein sequence ID" value="EAL69187"/>
    <property type="gene ID" value="DDB_G0276467"/>
</dbReference>
<dbReference type="GeneID" id="8620563"/>
<dbReference type="KEGG" id="ddi:DDB_G0276467"/>
<dbReference type="dictyBase" id="DDB_G0276467"/>
<dbReference type="HOGENOM" id="CLU_200039_1_0_1"/>
<dbReference type="InParanoid" id="Q86HV3"/>
<dbReference type="PRO" id="PR:Q86HV3"/>
<dbReference type="Proteomes" id="UP000002195">
    <property type="component" value="Chromosome 2"/>
</dbReference>
<reference key="1">
    <citation type="journal article" date="2002" name="Nature">
        <title>Sequence and analysis of chromosome 2 of Dictyostelium discoideum.</title>
        <authorList>
            <person name="Gloeckner G."/>
            <person name="Eichinger L."/>
            <person name="Szafranski K."/>
            <person name="Pachebat J.A."/>
            <person name="Bankier A.T."/>
            <person name="Dear P.H."/>
            <person name="Lehmann R."/>
            <person name="Baumgart C."/>
            <person name="Parra G."/>
            <person name="Abril J.F."/>
            <person name="Guigo R."/>
            <person name="Kumpf K."/>
            <person name="Tunggal B."/>
            <person name="Cox E.C."/>
            <person name="Quail M.A."/>
            <person name="Platzer M."/>
            <person name="Rosenthal A."/>
            <person name="Noegel A.A."/>
        </authorList>
    </citation>
    <scope>NUCLEOTIDE SEQUENCE [LARGE SCALE GENOMIC DNA]</scope>
    <source>
        <strain>AX4</strain>
    </source>
</reference>
<reference key="2">
    <citation type="journal article" date="2005" name="Nature">
        <title>The genome of the social amoeba Dictyostelium discoideum.</title>
        <authorList>
            <person name="Eichinger L."/>
            <person name="Pachebat J.A."/>
            <person name="Gloeckner G."/>
            <person name="Rajandream M.A."/>
            <person name="Sucgang R."/>
            <person name="Berriman M."/>
            <person name="Song J."/>
            <person name="Olsen R."/>
            <person name="Szafranski K."/>
            <person name="Xu Q."/>
            <person name="Tunggal B."/>
            <person name="Kummerfeld S."/>
            <person name="Madera M."/>
            <person name="Konfortov B.A."/>
            <person name="Rivero F."/>
            <person name="Bankier A.T."/>
            <person name="Lehmann R."/>
            <person name="Hamlin N."/>
            <person name="Davies R."/>
            <person name="Gaudet P."/>
            <person name="Fey P."/>
            <person name="Pilcher K."/>
            <person name="Chen G."/>
            <person name="Saunders D."/>
            <person name="Sodergren E.J."/>
            <person name="Davis P."/>
            <person name="Kerhornou A."/>
            <person name="Nie X."/>
            <person name="Hall N."/>
            <person name="Anjard C."/>
            <person name="Hemphill L."/>
            <person name="Bason N."/>
            <person name="Farbrother P."/>
            <person name="Desany B."/>
            <person name="Just E."/>
            <person name="Morio T."/>
            <person name="Rost R."/>
            <person name="Churcher C.M."/>
            <person name="Cooper J."/>
            <person name="Haydock S."/>
            <person name="van Driessche N."/>
            <person name="Cronin A."/>
            <person name="Goodhead I."/>
            <person name="Muzny D.M."/>
            <person name="Mourier T."/>
            <person name="Pain A."/>
            <person name="Lu M."/>
            <person name="Harper D."/>
            <person name="Lindsay R."/>
            <person name="Hauser H."/>
            <person name="James K.D."/>
            <person name="Quiles M."/>
            <person name="Madan Babu M."/>
            <person name="Saito T."/>
            <person name="Buchrieser C."/>
            <person name="Wardroper A."/>
            <person name="Felder M."/>
            <person name="Thangavelu M."/>
            <person name="Johnson D."/>
            <person name="Knights A."/>
            <person name="Loulseged H."/>
            <person name="Mungall K.L."/>
            <person name="Oliver K."/>
            <person name="Price C."/>
            <person name="Quail M.A."/>
            <person name="Urushihara H."/>
            <person name="Hernandez J."/>
            <person name="Rabbinowitsch E."/>
            <person name="Steffen D."/>
            <person name="Sanders M."/>
            <person name="Ma J."/>
            <person name="Kohara Y."/>
            <person name="Sharp S."/>
            <person name="Simmonds M.N."/>
            <person name="Spiegler S."/>
            <person name="Tivey A."/>
            <person name="Sugano S."/>
            <person name="White B."/>
            <person name="Walker D."/>
            <person name="Woodward J.R."/>
            <person name="Winckler T."/>
            <person name="Tanaka Y."/>
            <person name="Shaulsky G."/>
            <person name="Schleicher M."/>
            <person name="Weinstock G.M."/>
            <person name="Rosenthal A."/>
            <person name="Cox E.C."/>
            <person name="Chisholm R.L."/>
            <person name="Gibbs R.A."/>
            <person name="Loomis W.F."/>
            <person name="Platzer M."/>
            <person name="Kay R.R."/>
            <person name="Williams J.G."/>
            <person name="Dear P.H."/>
            <person name="Noegel A.A."/>
            <person name="Barrell B.G."/>
            <person name="Kuspa A."/>
        </authorList>
    </citation>
    <scope>NUCLEOTIDE SEQUENCE [LARGE SCALE GENOMIC DNA]</scope>
    <source>
        <strain>AX4</strain>
    </source>
</reference>
<protein>
    <recommendedName>
        <fullName>Uncharacterized protein DDB_G0276467</fullName>
    </recommendedName>
</protein>
<proteinExistence type="predicted"/>
<feature type="chain" id="PRO_0000348116" description="Uncharacterized protein DDB_G0276467">
    <location>
        <begin position="1"/>
        <end position="55"/>
    </location>
</feature>
<gene>
    <name type="ORF">DDB_G0276467</name>
</gene>
<keyword id="KW-1185">Reference proteome</keyword>
<accession>Q86HV3</accession>
<accession>Q551H8</accession>
<sequence length="55" mass="6323">MFLKLLISLSNKKNSSLNSISNEFNNNLNYSINNISNKNSITSVSYFTRPNFVNY</sequence>